<gene>
    <name evidence="1" type="primary">luxS</name>
    <name type="ordered locus">BG0376</name>
</gene>
<comment type="function">
    <text evidence="1">Involved in the synthesis of autoinducer 2 (AI-2) which is secreted by bacteria and is used to communicate both the cell density and the metabolic potential of the environment. The regulation of gene expression in response to changes in cell density is called quorum sensing. Catalyzes the transformation of S-ribosylhomocysteine (RHC) to homocysteine (HC) and 4,5-dihydroxy-2,3-pentadione (DPD).</text>
</comment>
<comment type="catalytic activity">
    <reaction evidence="1">
        <text>S-(5-deoxy-D-ribos-5-yl)-L-homocysteine = (S)-4,5-dihydroxypentane-2,3-dione + L-homocysteine</text>
        <dbReference type="Rhea" id="RHEA:17753"/>
        <dbReference type="ChEBI" id="CHEBI:29484"/>
        <dbReference type="ChEBI" id="CHEBI:58195"/>
        <dbReference type="ChEBI" id="CHEBI:58199"/>
        <dbReference type="EC" id="4.4.1.21"/>
    </reaction>
</comment>
<comment type="cofactor">
    <cofactor evidence="1">
        <name>Fe cation</name>
        <dbReference type="ChEBI" id="CHEBI:24875"/>
    </cofactor>
    <text evidence="1">Binds 1 Fe cation per subunit.</text>
</comment>
<comment type="subunit">
    <text evidence="1">Homodimer.</text>
</comment>
<comment type="similarity">
    <text evidence="1">Belongs to the LuxS family.</text>
</comment>
<proteinExistence type="inferred from homology"/>
<feature type="chain" id="PRO_0000172213" description="S-ribosylhomocysteine lyase">
    <location>
        <begin position="1"/>
        <end position="157"/>
    </location>
</feature>
<feature type="binding site" evidence="1">
    <location>
        <position position="53"/>
    </location>
    <ligand>
        <name>Fe cation</name>
        <dbReference type="ChEBI" id="CHEBI:24875"/>
    </ligand>
</feature>
<feature type="binding site" evidence="1">
    <location>
        <position position="57"/>
    </location>
    <ligand>
        <name>Fe cation</name>
        <dbReference type="ChEBI" id="CHEBI:24875"/>
    </ligand>
</feature>
<feature type="binding site" evidence="1">
    <location>
        <position position="124"/>
    </location>
    <ligand>
        <name>Fe cation</name>
        <dbReference type="ChEBI" id="CHEBI:24875"/>
    </ligand>
</feature>
<sequence length="157" mass="18133">MKKITSFTIDHTKLNPGIYVSRKDTFENVIFTTIDIRIKAPNIEPIIENAAIHTIEHIGATLLRNNEVWTEKIVYFGPMGCRTGFYLIIFGNYESKDLIDLISWLFSEIVNFSEPIPGASHKECGNYKDHNLDMAKYESSKYLQILNNIKEENLKYP</sequence>
<organism>
    <name type="scientific">Borrelia garinii subsp. bavariensis (strain ATCC BAA-2496 / DSM 23469 / PBi)</name>
    <name type="common">Borreliella bavariensis</name>
    <dbReference type="NCBI Taxonomy" id="290434"/>
    <lineage>
        <taxon>Bacteria</taxon>
        <taxon>Pseudomonadati</taxon>
        <taxon>Spirochaetota</taxon>
        <taxon>Spirochaetia</taxon>
        <taxon>Spirochaetales</taxon>
        <taxon>Borreliaceae</taxon>
        <taxon>Borreliella</taxon>
    </lineage>
</organism>
<accession>Q661P2</accession>
<reference key="1">
    <citation type="journal article" date="2004" name="Nucleic Acids Res.">
        <title>Comparative analysis of the Borrelia garinii genome.</title>
        <authorList>
            <person name="Gloeckner G."/>
            <person name="Lehmann R."/>
            <person name="Romualdi A."/>
            <person name="Pradella S."/>
            <person name="Schulte-Spechtel U."/>
            <person name="Schilhabel M."/>
            <person name="Wilske B."/>
            <person name="Suehnel J."/>
            <person name="Platzer M."/>
        </authorList>
    </citation>
    <scope>NUCLEOTIDE SEQUENCE [LARGE SCALE GENOMIC DNA]</scope>
    <source>
        <strain>ATCC BAA-2496 / DSM 23469 / PBi</strain>
    </source>
</reference>
<name>LUXS_BORGP</name>
<dbReference type="EC" id="4.4.1.21" evidence="1"/>
<dbReference type="EMBL" id="CP000013">
    <property type="protein sequence ID" value="AAU07229.1"/>
    <property type="molecule type" value="Genomic_DNA"/>
</dbReference>
<dbReference type="RefSeq" id="WP_011193703.1">
    <property type="nucleotide sequence ID" value="NZ_CP028872.1"/>
</dbReference>
<dbReference type="SMR" id="Q661P2"/>
<dbReference type="GeneID" id="45161164"/>
<dbReference type="KEGG" id="bga:BG0376"/>
<dbReference type="eggNOG" id="COG1854">
    <property type="taxonomic scope" value="Bacteria"/>
</dbReference>
<dbReference type="HOGENOM" id="CLU_107531_1_0_12"/>
<dbReference type="OrthoDB" id="9788129at2"/>
<dbReference type="Proteomes" id="UP000002276">
    <property type="component" value="Chromosome"/>
</dbReference>
<dbReference type="GO" id="GO:0005506">
    <property type="term" value="F:iron ion binding"/>
    <property type="evidence" value="ECO:0007669"/>
    <property type="project" value="InterPro"/>
</dbReference>
<dbReference type="GO" id="GO:0043768">
    <property type="term" value="F:S-ribosylhomocysteine lyase activity"/>
    <property type="evidence" value="ECO:0007669"/>
    <property type="project" value="UniProtKB-UniRule"/>
</dbReference>
<dbReference type="GO" id="GO:0009372">
    <property type="term" value="P:quorum sensing"/>
    <property type="evidence" value="ECO:0007669"/>
    <property type="project" value="UniProtKB-UniRule"/>
</dbReference>
<dbReference type="Gene3D" id="3.30.1360.80">
    <property type="entry name" value="S-ribosylhomocysteinase (LuxS)"/>
    <property type="match status" value="1"/>
</dbReference>
<dbReference type="HAMAP" id="MF_00091">
    <property type="entry name" value="LuxS"/>
    <property type="match status" value="1"/>
</dbReference>
<dbReference type="InterPro" id="IPR037005">
    <property type="entry name" value="LuxS_sf"/>
</dbReference>
<dbReference type="InterPro" id="IPR011249">
    <property type="entry name" value="Metalloenz_LuxS/M16"/>
</dbReference>
<dbReference type="InterPro" id="IPR003815">
    <property type="entry name" value="S-ribosylhomocysteinase"/>
</dbReference>
<dbReference type="NCBIfam" id="NF002604">
    <property type="entry name" value="PRK02260.1-4"/>
    <property type="match status" value="1"/>
</dbReference>
<dbReference type="PANTHER" id="PTHR35799">
    <property type="entry name" value="S-RIBOSYLHOMOCYSTEINE LYASE"/>
    <property type="match status" value="1"/>
</dbReference>
<dbReference type="PANTHER" id="PTHR35799:SF1">
    <property type="entry name" value="S-RIBOSYLHOMOCYSTEINE LYASE"/>
    <property type="match status" value="1"/>
</dbReference>
<dbReference type="Pfam" id="PF02664">
    <property type="entry name" value="LuxS"/>
    <property type="match status" value="1"/>
</dbReference>
<dbReference type="PIRSF" id="PIRSF006160">
    <property type="entry name" value="AI2"/>
    <property type="match status" value="1"/>
</dbReference>
<dbReference type="PRINTS" id="PR01487">
    <property type="entry name" value="LUXSPROTEIN"/>
</dbReference>
<dbReference type="SUPFAM" id="SSF63411">
    <property type="entry name" value="LuxS/MPP-like metallohydrolase"/>
    <property type="match status" value="1"/>
</dbReference>
<keyword id="KW-0071">Autoinducer synthesis</keyword>
<keyword id="KW-0408">Iron</keyword>
<keyword id="KW-0456">Lyase</keyword>
<keyword id="KW-0479">Metal-binding</keyword>
<keyword id="KW-0673">Quorum sensing</keyword>
<protein>
    <recommendedName>
        <fullName evidence="1">S-ribosylhomocysteine lyase</fullName>
        <ecNumber evidence="1">4.4.1.21</ecNumber>
    </recommendedName>
    <alternativeName>
        <fullName evidence="1">AI-2 synthesis protein</fullName>
    </alternativeName>
    <alternativeName>
        <fullName evidence="1">Autoinducer-2 production protein LuxS</fullName>
    </alternativeName>
</protein>
<evidence type="ECO:0000255" key="1">
    <source>
        <dbReference type="HAMAP-Rule" id="MF_00091"/>
    </source>
</evidence>